<comment type="function">
    <text evidence="1">Catalyzes the oxidative demethylation of N-methyl-L-tryptophan.</text>
</comment>
<comment type="catalytic activity">
    <reaction evidence="1">
        <text>N(alpha)-methyl-L-tryptophan + O2 + H2O = L-tryptophan + formaldehyde + H2O2</text>
        <dbReference type="Rhea" id="RHEA:28006"/>
        <dbReference type="ChEBI" id="CHEBI:15377"/>
        <dbReference type="ChEBI" id="CHEBI:15379"/>
        <dbReference type="ChEBI" id="CHEBI:16240"/>
        <dbReference type="ChEBI" id="CHEBI:16842"/>
        <dbReference type="ChEBI" id="CHEBI:57283"/>
        <dbReference type="ChEBI" id="CHEBI:57912"/>
    </reaction>
</comment>
<comment type="cofactor">
    <cofactor evidence="1">
        <name>FAD</name>
        <dbReference type="ChEBI" id="CHEBI:57692"/>
    </cofactor>
    <text evidence="1">Binds 1 FAD per subunit.</text>
</comment>
<comment type="subunit">
    <text evidence="1">Monomer.</text>
</comment>
<comment type="similarity">
    <text evidence="1">Belongs to the MSOX/MTOX family. MTOX subfamily.</text>
</comment>
<organism>
    <name type="scientific">Salmonella dublin (strain CT_02021853)</name>
    <dbReference type="NCBI Taxonomy" id="439851"/>
    <lineage>
        <taxon>Bacteria</taxon>
        <taxon>Pseudomonadati</taxon>
        <taxon>Pseudomonadota</taxon>
        <taxon>Gammaproteobacteria</taxon>
        <taxon>Enterobacterales</taxon>
        <taxon>Enterobacteriaceae</taxon>
        <taxon>Salmonella</taxon>
    </lineage>
</organism>
<sequence length="372" mass="40700">MKYDLIIIGSGSVGAAAGYYATRAGLKVLMTDAHMPPHQQGSHHGDTRLIRHAYGEGEKYVPLMLRAQTLWDELSTHNEEPIFVRSGVVNLGPADSAFLANVARSAQQWQLNVERLDATALMTRWPEIRVPDNYIGLFEADSGFLRSELAITTWLRLAREAGCAQLFNSQVSHIHHDDNGVTIETSEGSYHASKALISAGTWVKALVPELPVQPVRKVFAWFKADGRYSTKNRFPAFTGEMPNGDQYYGFPAENDELKIGKHNGGQLIQAPEERKPFAAVASDGAEAFPFLRNVLPGIGGCLHGAACTYDNSPDENFIIDTLPGHENTLVITGLSGHGFKFAPVLGEIAADFALGKTSSFDLTPFRLSRFSQ</sequence>
<keyword id="KW-0274">FAD</keyword>
<keyword id="KW-0285">Flavoprotein</keyword>
<keyword id="KW-0560">Oxidoreductase</keyword>
<reference key="1">
    <citation type="journal article" date="2011" name="J. Bacteriol.">
        <title>Comparative genomics of 28 Salmonella enterica isolates: evidence for CRISPR-mediated adaptive sublineage evolution.</title>
        <authorList>
            <person name="Fricke W.F."/>
            <person name="Mammel M.K."/>
            <person name="McDermott P.F."/>
            <person name="Tartera C."/>
            <person name="White D.G."/>
            <person name="Leclerc J.E."/>
            <person name="Ravel J."/>
            <person name="Cebula T.A."/>
        </authorList>
    </citation>
    <scope>NUCLEOTIDE SEQUENCE [LARGE SCALE GENOMIC DNA]</scope>
    <source>
        <strain>CT_02021853</strain>
    </source>
</reference>
<evidence type="ECO:0000255" key="1">
    <source>
        <dbReference type="HAMAP-Rule" id="MF_00515"/>
    </source>
</evidence>
<gene>
    <name evidence="1" type="primary">solA</name>
    <name type="ordered locus">SeD_A2212</name>
</gene>
<proteinExistence type="inferred from homology"/>
<accession>B5FL04</accession>
<dbReference type="EC" id="1.5.3.-" evidence="1"/>
<dbReference type="EMBL" id="CP001144">
    <property type="protein sequence ID" value="ACH74889.1"/>
    <property type="molecule type" value="Genomic_DNA"/>
</dbReference>
<dbReference type="RefSeq" id="WP_000872758.1">
    <property type="nucleotide sequence ID" value="NC_011205.1"/>
</dbReference>
<dbReference type="SMR" id="B5FL04"/>
<dbReference type="KEGG" id="sed:SeD_A2212"/>
<dbReference type="HOGENOM" id="CLU_007884_2_1_6"/>
<dbReference type="Proteomes" id="UP000008322">
    <property type="component" value="Chromosome"/>
</dbReference>
<dbReference type="GO" id="GO:0005829">
    <property type="term" value="C:cytosol"/>
    <property type="evidence" value="ECO:0007669"/>
    <property type="project" value="TreeGrafter"/>
</dbReference>
<dbReference type="GO" id="GO:0050660">
    <property type="term" value="F:flavin adenine dinucleotide binding"/>
    <property type="evidence" value="ECO:0007669"/>
    <property type="project" value="InterPro"/>
</dbReference>
<dbReference type="GO" id="GO:0050131">
    <property type="term" value="F:N-methyl-L-amino-acid oxidase activity"/>
    <property type="evidence" value="ECO:0007669"/>
    <property type="project" value="InterPro"/>
</dbReference>
<dbReference type="GO" id="GO:0008115">
    <property type="term" value="F:sarcosine oxidase activity"/>
    <property type="evidence" value="ECO:0007669"/>
    <property type="project" value="TreeGrafter"/>
</dbReference>
<dbReference type="Gene3D" id="3.30.9.10">
    <property type="entry name" value="D-Amino Acid Oxidase, subunit A, domain 2"/>
    <property type="match status" value="1"/>
</dbReference>
<dbReference type="Gene3D" id="3.50.50.60">
    <property type="entry name" value="FAD/NAD(P)-binding domain"/>
    <property type="match status" value="1"/>
</dbReference>
<dbReference type="HAMAP" id="MF_00515">
    <property type="entry name" value="MTOX"/>
    <property type="match status" value="1"/>
</dbReference>
<dbReference type="InterPro" id="IPR006076">
    <property type="entry name" value="FAD-dep_OxRdtase"/>
</dbReference>
<dbReference type="InterPro" id="IPR036188">
    <property type="entry name" value="FAD/NAD-bd_sf"/>
</dbReference>
<dbReference type="InterPro" id="IPR023493">
    <property type="entry name" value="Me_Trp_Oxase_MTOX"/>
</dbReference>
<dbReference type="InterPro" id="IPR045170">
    <property type="entry name" value="MTOX"/>
</dbReference>
<dbReference type="NCBIfam" id="NF008425">
    <property type="entry name" value="PRK11259.1"/>
    <property type="match status" value="1"/>
</dbReference>
<dbReference type="PANTHER" id="PTHR10961:SF7">
    <property type="entry name" value="FAD DEPENDENT OXIDOREDUCTASE DOMAIN-CONTAINING PROTEIN"/>
    <property type="match status" value="1"/>
</dbReference>
<dbReference type="PANTHER" id="PTHR10961">
    <property type="entry name" value="PEROXISOMAL SARCOSINE OXIDASE"/>
    <property type="match status" value="1"/>
</dbReference>
<dbReference type="Pfam" id="PF01266">
    <property type="entry name" value="DAO"/>
    <property type="match status" value="1"/>
</dbReference>
<dbReference type="SUPFAM" id="SSF54373">
    <property type="entry name" value="FAD-linked reductases, C-terminal domain"/>
    <property type="match status" value="1"/>
</dbReference>
<dbReference type="SUPFAM" id="SSF51905">
    <property type="entry name" value="FAD/NAD(P)-binding domain"/>
    <property type="match status" value="1"/>
</dbReference>
<name>MTOX_SALDC</name>
<feature type="chain" id="PRO_1000127444" description="N-methyl-L-tryptophan oxidase">
    <location>
        <begin position="1"/>
        <end position="372"/>
    </location>
</feature>
<feature type="binding site" evidence="1">
    <location>
        <begin position="4"/>
        <end position="34"/>
    </location>
    <ligand>
        <name>FAD</name>
        <dbReference type="ChEBI" id="CHEBI:57692"/>
    </ligand>
</feature>
<feature type="modified residue" description="S-8alpha-FAD cysteine" evidence="1">
    <location>
        <position position="307"/>
    </location>
</feature>
<protein>
    <recommendedName>
        <fullName evidence="1">N-methyl-L-tryptophan oxidase</fullName>
        <shortName evidence="1">MTOX</shortName>
        <ecNumber evidence="1">1.5.3.-</ecNumber>
    </recommendedName>
</protein>